<reference key="1">
    <citation type="submission" date="2003-09" db="EMBL/GenBank/DDBJ databases">
        <title>Molecular cloning of Oryza sativa homeodomain leucine-zipper protein Hox9 gene as well as the bioinformatics analysis.</title>
        <authorList>
            <person name="Yang L."/>
            <person name="Shen W.-B."/>
            <person name="Sun Y.-G."/>
            <person name="Xu L.-L."/>
        </authorList>
    </citation>
    <scope>NUCLEOTIDE SEQUENCE [MRNA]</scope>
</reference>
<reference key="2">
    <citation type="journal article" date="2003" name="Science">
        <title>In-depth view of structure, activity, and evolution of rice chromosome 10.</title>
        <authorList>
            <person name="Yu Y."/>
            <person name="Rambo T."/>
            <person name="Currie J."/>
            <person name="Saski C."/>
            <person name="Kim H.-R."/>
            <person name="Collura K."/>
            <person name="Thompson S."/>
            <person name="Simmons J."/>
            <person name="Yang T.-J."/>
            <person name="Nah G."/>
            <person name="Patel A.J."/>
            <person name="Thurmond S."/>
            <person name="Henry D."/>
            <person name="Oates R."/>
            <person name="Palmer M."/>
            <person name="Pries G."/>
            <person name="Gibson J."/>
            <person name="Anderson H."/>
            <person name="Paradkar M."/>
            <person name="Crane L."/>
            <person name="Dale J."/>
            <person name="Carver M.B."/>
            <person name="Wood T."/>
            <person name="Frisch D."/>
            <person name="Engler F."/>
            <person name="Soderlund C."/>
            <person name="Palmer L.E."/>
            <person name="Teytelman L."/>
            <person name="Nascimento L."/>
            <person name="De la Bastide M."/>
            <person name="Spiegel L."/>
            <person name="Ware D."/>
            <person name="O'Shaughnessy A."/>
            <person name="Dike S."/>
            <person name="Dedhia N."/>
            <person name="Preston R."/>
            <person name="Huang E."/>
            <person name="Ferraro K."/>
            <person name="Kuit K."/>
            <person name="Miller B."/>
            <person name="Zutavern T."/>
            <person name="Katzenberger F."/>
            <person name="Muller S."/>
            <person name="Balija V."/>
            <person name="Martienssen R.A."/>
            <person name="Stein L."/>
            <person name="Minx P."/>
            <person name="Johnson D."/>
            <person name="Cordum H."/>
            <person name="Mardis E."/>
            <person name="Cheng Z."/>
            <person name="Jiang J."/>
            <person name="Wilson R."/>
            <person name="McCombie W.R."/>
            <person name="Wing R.A."/>
            <person name="Yuan Q."/>
            <person name="Ouyang S."/>
            <person name="Liu J."/>
            <person name="Jones K.M."/>
            <person name="Gansberger K."/>
            <person name="Moffat K."/>
            <person name="Hill J."/>
            <person name="Tsitrin T."/>
            <person name="Overton L."/>
            <person name="Bera J."/>
            <person name="Kim M."/>
            <person name="Jin S."/>
            <person name="Tallon L."/>
            <person name="Ciecko A."/>
            <person name="Pai G."/>
            <person name="Van Aken S."/>
            <person name="Utterback T."/>
            <person name="Reidmuller S."/>
            <person name="Bormann J."/>
            <person name="Feldblyum T."/>
            <person name="Hsiao J."/>
            <person name="Zismann V."/>
            <person name="Blunt S."/>
            <person name="de Vazeille A.R."/>
            <person name="Shaffer T."/>
            <person name="Koo H."/>
            <person name="Suh B."/>
            <person name="Yang Q."/>
            <person name="Haas B."/>
            <person name="Peterson J."/>
            <person name="Pertea M."/>
            <person name="Volfovsky N."/>
            <person name="Wortman J."/>
            <person name="White O."/>
            <person name="Salzberg S.L."/>
            <person name="Fraser C.M."/>
            <person name="Buell C.R."/>
            <person name="Messing J."/>
            <person name="Song R."/>
            <person name="Fuks G."/>
            <person name="Llaca V."/>
            <person name="Kovchak S."/>
            <person name="Young S."/>
            <person name="Bowers J.E."/>
            <person name="Paterson A.H."/>
            <person name="Johns M.A."/>
            <person name="Mao L."/>
            <person name="Pan H."/>
            <person name="Dean R.A."/>
        </authorList>
    </citation>
    <scope>NUCLEOTIDE SEQUENCE [LARGE SCALE GENOMIC DNA]</scope>
    <source>
        <strain>cv. Nipponbare</strain>
    </source>
</reference>
<reference key="3">
    <citation type="journal article" date="2005" name="Nature">
        <title>The map-based sequence of the rice genome.</title>
        <authorList>
            <consortium name="International rice genome sequencing project (IRGSP)"/>
        </authorList>
    </citation>
    <scope>NUCLEOTIDE SEQUENCE [LARGE SCALE GENOMIC DNA]</scope>
    <source>
        <strain>cv. Nipponbare</strain>
    </source>
</reference>
<reference key="4">
    <citation type="journal article" date="2008" name="Nucleic Acids Res.">
        <title>The rice annotation project database (RAP-DB): 2008 update.</title>
        <authorList>
            <consortium name="The rice annotation project (RAP)"/>
        </authorList>
    </citation>
    <scope>GENOME REANNOTATION</scope>
    <source>
        <strain>cv. Nipponbare</strain>
    </source>
</reference>
<reference key="5">
    <citation type="journal article" date="2013" name="Rice">
        <title>Improvement of the Oryza sativa Nipponbare reference genome using next generation sequence and optical map data.</title>
        <authorList>
            <person name="Kawahara Y."/>
            <person name="de la Bastide M."/>
            <person name="Hamilton J.P."/>
            <person name="Kanamori H."/>
            <person name="McCombie W.R."/>
            <person name="Ouyang S."/>
            <person name="Schwartz D.C."/>
            <person name="Tanaka T."/>
            <person name="Wu J."/>
            <person name="Zhou S."/>
            <person name="Childs K.L."/>
            <person name="Davidson R.M."/>
            <person name="Lin H."/>
            <person name="Quesada-Ocampo L."/>
            <person name="Vaillancourt B."/>
            <person name="Sakai H."/>
            <person name="Lee S.S."/>
            <person name="Kim J."/>
            <person name="Numa H."/>
            <person name="Itoh T."/>
            <person name="Buell C.R."/>
            <person name="Matsumoto T."/>
        </authorList>
    </citation>
    <scope>GENOME REANNOTATION</scope>
    <source>
        <strain>cv. Nipponbare</strain>
    </source>
</reference>
<reference key="6">
    <citation type="journal article" date="2003" name="Science">
        <title>Collection, mapping, and annotation of over 28,000 cDNA clones from japonica rice.</title>
        <authorList>
            <consortium name="The rice full-length cDNA consortium"/>
        </authorList>
    </citation>
    <scope>NUCLEOTIDE SEQUENCE [LARGE SCALE MRNA]</scope>
    <source>
        <strain>cv. Nipponbare</strain>
    </source>
</reference>
<reference key="7">
    <citation type="journal article" date="2008" name="Plant Mol. Biol.">
        <title>A genome-wide survey of HD-Zip genes in rice and analysis of drought-responsive family members.</title>
        <authorList>
            <person name="Agalou A."/>
            <person name="Purwantomo S."/>
            <person name="Oevernaes E."/>
            <person name="Johannesson H."/>
            <person name="Zhu X."/>
            <person name="Estiati A."/>
            <person name="de Kam R.J."/>
            <person name="Engstroem P."/>
            <person name="Slamet-Loedin I.H."/>
            <person name="Zhu Z."/>
            <person name="Wang M."/>
            <person name="Xiong L."/>
            <person name="Meijer A.H."/>
            <person name="Ouwerkerk P.B.F."/>
        </authorList>
    </citation>
    <scope>NUCLEOTIDE SEQUENCE [MRNA] OF 775-840</scope>
    <scope>TISSUE SPECIFICITY</scope>
    <scope>GENE FAMILY</scope>
    <scope>NOMENCLATURE</scope>
    <source>
        <strain>cv. Nipponbare</strain>
    </source>
</reference>
<reference key="8">
    <citation type="journal article" date="2007" name="Proc. Natl. Acad. Sci. U.S.A.">
        <title>The small interfering RNA production pathway is required for shoot meristem initiation in rice.</title>
        <authorList>
            <person name="Nagasaki H."/>
            <person name="Itoh J."/>
            <person name="Hayashi K."/>
            <person name="Hibara K."/>
            <person name="Satoh-Nagasawa N."/>
            <person name="Nosaka M."/>
            <person name="Mukouhata M."/>
            <person name="Ashikari M."/>
            <person name="Kitano H."/>
            <person name="Matsuoka M."/>
            <person name="Nagato Y."/>
            <person name="Sato Y."/>
        </authorList>
    </citation>
    <scope>INDUCTION</scope>
</reference>
<feature type="chain" id="PRO_0000331691" description="Homeobox-leucine zipper protein HOX9">
    <location>
        <begin position="1"/>
        <end position="840"/>
    </location>
</feature>
<feature type="domain" description="START" evidence="4">
    <location>
        <begin position="157"/>
        <end position="385"/>
    </location>
</feature>
<feature type="DNA-binding region" description="Homeobox" evidence="3">
    <location>
        <begin position="26"/>
        <end position="89"/>
    </location>
</feature>
<feature type="region of interest" description="Disordered" evidence="5">
    <location>
        <begin position="1"/>
        <end position="26"/>
    </location>
</feature>
<feature type="region of interest" description="Disordered" evidence="5">
    <location>
        <begin position="135"/>
        <end position="160"/>
    </location>
</feature>
<feature type="coiled-coil region" evidence="2">
    <location>
        <begin position="86"/>
        <end position="135"/>
    </location>
</feature>
<feature type="compositionally biased region" description="Gly residues" evidence="5">
    <location>
        <begin position="12"/>
        <end position="21"/>
    </location>
</feature>
<feature type="sequence conflict" description="In Ref. 1; AAQ98963." evidence="8" ref="1">
    <original>R</original>
    <variation>P</variation>
    <location>
        <position position="8"/>
    </location>
</feature>
<feature type="sequence conflict" description="In Ref. 1; AAQ98963." evidence="8" ref="1">
    <original>Y</original>
    <variation>F</variation>
    <location>
        <position position="20"/>
    </location>
</feature>
<feature type="sequence conflict" description="In Ref. 1; AAQ98963 and 6; AK102603." evidence="8" ref="1 6">
    <original>P</original>
    <variation>L</variation>
    <location>
        <position position="151"/>
    </location>
</feature>
<feature type="sequence conflict" description="In Ref. 1; AAQ98963 and 6; AK102603." evidence="8" ref="1 6">
    <original>P</original>
    <variation>T</variation>
    <location>
        <position position="319"/>
    </location>
</feature>
<feature type="sequence conflict" description="In Ref. 1; AAQ98963 and 6; AK102603." evidence="8" ref="1 6">
    <original>K</original>
    <variation>R</variation>
    <location>
        <position position="436"/>
    </location>
</feature>
<feature type="sequence conflict" description="In Ref. 1; AAQ98963 and 6; AK102603." evidence="8" ref="1 6">
    <original>P</original>
    <variation>Q</variation>
    <location>
        <position position="584"/>
    </location>
</feature>
<feature type="sequence conflict" description="In Ref. 1; AAQ98963 and 6; AK102603." evidence="8" ref="1 6">
    <original>D</original>
    <variation>N</variation>
    <location>
        <position position="596"/>
    </location>
</feature>
<accession>Q9AV49</accession>
<accession>F4MGX2</accession>
<accession>Q6Q7D6</accession>
<accession>Q6TDS4</accession>
<accession>Q7XDB2</accession>
<keyword id="KW-0175">Coiled coil</keyword>
<keyword id="KW-0238">DNA-binding</keyword>
<keyword id="KW-0371">Homeobox</keyword>
<keyword id="KW-0539">Nucleus</keyword>
<keyword id="KW-1185">Reference proteome</keyword>
<keyword id="KW-0804">Transcription</keyword>
<keyword id="KW-0805">Transcription regulation</keyword>
<gene>
    <name type="primary">HOX9</name>
    <name type="synonym">HB2</name>
    <name type="ordered locus">Os10g0480200</name>
    <name type="ordered locus">LOC_Os10g33960</name>
    <name type="ORF">OSJNBa0093B11.11</name>
</gene>
<comment type="function">
    <text evidence="1">Probable transcription factor.</text>
</comment>
<comment type="subcellular location">
    <subcellularLocation>
        <location evidence="8">Nucleus</location>
    </subcellularLocation>
</comment>
<comment type="tissue specificity">
    <text evidence="7">Expressed in seedlings, roots, stems, leaf sheaths and blades and panicles.</text>
</comment>
<comment type="induction">
    <text evidence="6">Repressed by miR166 in the shoot apicam meristem (SAM) region of developing embryo.</text>
</comment>
<comment type="similarity">
    <text evidence="8">Belongs to the HD-ZIP homeobox family. Class III subfamily.</text>
</comment>
<evidence type="ECO:0000250" key="1"/>
<evidence type="ECO:0000255" key="2"/>
<evidence type="ECO:0000255" key="3">
    <source>
        <dbReference type="PROSITE-ProRule" id="PRU00108"/>
    </source>
</evidence>
<evidence type="ECO:0000255" key="4">
    <source>
        <dbReference type="PROSITE-ProRule" id="PRU00197"/>
    </source>
</evidence>
<evidence type="ECO:0000256" key="5">
    <source>
        <dbReference type="SAM" id="MobiDB-lite"/>
    </source>
</evidence>
<evidence type="ECO:0000269" key="6">
    <source>
    </source>
</evidence>
<evidence type="ECO:0000269" key="7">
    <source>
    </source>
</evidence>
<evidence type="ECO:0000305" key="8"/>
<proteinExistence type="evidence at transcript level"/>
<organism>
    <name type="scientific">Oryza sativa subsp. japonica</name>
    <name type="common">Rice</name>
    <dbReference type="NCBI Taxonomy" id="39947"/>
    <lineage>
        <taxon>Eukaryota</taxon>
        <taxon>Viridiplantae</taxon>
        <taxon>Streptophyta</taxon>
        <taxon>Embryophyta</taxon>
        <taxon>Tracheophyta</taxon>
        <taxon>Spermatophyta</taxon>
        <taxon>Magnoliopsida</taxon>
        <taxon>Liliopsida</taxon>
        <taxon>Poales</taxon>
        <taxon>Poaceae</taxon>
        <taxon>BOP clade</taxon>
        <taxon>Oryzoideae</taxon>
        <taxon>Oryzeae</taxon>
        <taxon>Oryzinae</taxon>
        <taxon>Oryza</taxon>
        <taxon>Oryza sativa</taxon>
    </lineage>
</organism>
<name>HOX9_ORYSJ</name>
<dbReference type="EMBL" id="AY423716">
    <property type="protein sequence ID" value="AAQ98963.1"/>
    <property type="molecule type" value="mRNA"/>
</dbReference>
<dbReference type="EMBL" id="AC024594">
    <property type="protein sequence ID" value="AAK21338.1"/>
    <property type="molecule type" value="Genomic_DNA"/>
</dbReference>
<dbReference type="EMBL" id="DP000086">
    <property type="protein sequence ID" value="AAP54299.1"/>
    <property type="molecule type" value="Genomic_DNA"/>
</dbReference>
<dbReference type="EMBL" id="DP000086">
    <property type="protein sequence ID" value="ABB47795.1"/>
    <property type="molecule type" value="Genomic_DNA"/>
</dbReference>
<dbReference type="EMBL" id="AP008216">
    <property type="protein sequence ID" value="BAF26787.1"/>
    <property type="molecule type" value="Genomic_DNA"/>
</dbReference>
<dbReference type="EMBL" id="AP014966">
    <property type="protein sequence ID" value="BAT11330.1"/>
    <property type="molecule type" value="Genomic_DNA"/>
</dbReference>
<dbReference type="EMBL" id="AK102603">
    <property type="status" value="NOT_ANNOTATED_CDS"/>
    <property type="molecule type" value="mRNA"/>
</dbReference>
<dbReference type="EMBL" id="AY554037">
    <property type="protein sequence ID" value="AAS83424.1"/>
    <property type="molecule type" value="mRNA"/>
</dbReference>
<dbReference type="RefSeq" id="XP_015614901.1">
    <property type="nucleotide sequence ID" value="XM_015759415.1"/>
</dbReference>
<dbReference type="SMR" id="Q9AV49"/>
<dbReference type="FunCoup" id="Q9AV49">
    <property type="interactions" value="1551"/>
</dbReference>
<dbReference type="STRING" id="39947.Q9AV49"/>
<dbReference type="PaxDb" id="39947-Q9AV49"/>
<dbReference type="EnsemblPlants" id="Os10t0480200-01">
    <property type="protein sequence ID" value="Os10t0480200-01"/>
    <property type="gene ID" value="Os10g0480200"/>
</dbReference>
<dbReference type="EnsemblPlants" id="Os10t0480200-02">
    <property type="protein sequence ID" value="Os10t0480200-02"/>
    <property type="gene ID" value="Os10g0480200"/>
</dbReference>
<dbReference type="Gramene" id="Os10t0480200-01">
    <property type="protein sequence ID" value="Os10t0480200-01"/>
    <property type="gene ID" value="Os10g0480200"/>
</dbReference>
<dbReference type="Gramene" id="Os10t0480200-02">
    <property type="protein sequence ID" value="Os10t0480200-02"/>
    <property type="gene ID" value="Os10g0480200"/>
</dbReference>
<dbReference type="KEGG" id="dosa:Os10g0480200"/>
<dbReference type="eggNOG" id="ENOG502QRJM">
    <property type="taxonomic scope" value="Eukaryota"/>
</dbReference>
<dbReference type="HOGENOM" id="CLU_012517_0_0_1"/>
<dbReference type="InParanoid" id="Q9AV49"/>
<dbReference type="OMA" id="SEWADFH"/>
<dbReference type="OrthoDB" id="125004at2759"/>
<dbReference type="Proteomes" id="UP000000763">
    <property type="component" value="Chromosome 10"/>
</dbReference>
<dbReference type="Proteomes" id="UP000059680">
    <property type="component" value="Chromosome 10"/>
</dbReference>
<dbReference type="ExpressionAtlas" id="Q9AV49">
    <property type="expression patterns" value="baseline and differential"/>
</dbReference>
<dbReference type="GO" id="GO:0005634">
    <property type="term" value="C:nucleus"/>
    <property type="evidence" value="ECO:0007669"/>
    <property type="project" value="UniProtKB-SubCell"/>
</dbReference>
<dbReference type="GO" id="GO:0003677">
    <property type="term" value="F:DNA binding"/>
    <property type="evidence" value="ECO:0007669"/>
    <property type="project" value="UniProtKB-KW"/>
</dbReference>
<dbReference type="GO" id="GO:0003700">
    <property type="term" value="F:DNA-binding transcription factor activity"/>
    <property type="evidence" value="ECO:0007669"/>
    <property type="project" value="InterPro"/>
</dbReference>
<dbReference type="GO" id="GO:0008289">
    <property type="term" value="F:lipid binding"/>
    <property type="evidence" value="ECO:0007669"/>
    <property type="project" value="InterPro"/>
</dbReference>
<dbReference type="CDD" id="cd14686">
    <property type="entry name" value="bZIP"/>
    <property type="match status" value="1"/>
</dbReference>
<dbReference type="CDD" id="cd00086">
    <property type="entry name" value="homeodomain"/>
    <property type="match status" value="1"/>
</dbReference>
<dbReference type="CDD" id="cd08875">
    <property type="entry name" value="START_ArGLABRA2_like"/>
    <property type="match status" value="1"/>
</dbReference>
<dbReference type="FunFam" id="1.10.10.60:FF:000197">
    <property type="entry name" value="Homeobox-leucine zipper protein REVOLUTA"/>
    <property type="match status" value="1"/>
</dbReference>
<dbReference type="Gene3D" id="3.30.530.20">
    <property type="match status" value="1"/>
</dbReference>
<dbReference type="Gene3D" id="1.10.10.60">
    <property type="entry name" value="Homeodomain-like"/>
    <property type="match status" value="1"/>
</dbReference>
<dbReference type="InterPro" id="IPR001356">
    <property type="entry name" value="HD"/>
</dbReference>
<dbReference type="InterPro" id="IPR044830">
    <property type="entry name" value="HD-Zip_III"/>
</dbReference>
<dbReference type="InterPro" id="IPR009057">
    <property type="entry name" value="Homeodomain-like_sf"/>
</dbReference>
<dbReference type="InterPro" id="IPR013978">
    <property type="entry name" value="MEKHLA"/>
</dbReference>
<dbReference type="InterPro" id="IPR023393">
    <property type="entry name" value="START-like_dom_sf"/>
</dbReference>
<dbReference type="InterPro" id="IPR002913">
    <property type="entry name" value="START_lipid-bd_dom"/>
</dbReference>
<dbReference type="PANTHER" id="PTHR45950">
    <property type="entry name" value="HOMEOBOX-LEUCINE ZIPPER PROTEIN ATHB-14"/>
    <property type="match status" value="1"/>
</dbReference>
<dbReference type="PANTHER" id="PTHR45950:SF10">
    <property type="entry name" value="HOMEOBOX-LEUCINE ZIPPER PROTEIN REVOLUTA"/>
    <property type="match status" value="1"/>
</dbReference>
<dbReference type="Pfam" id="PF00046">
    <property type="entry name" value="Homeodomain"/>
    <property type="match status" value="1"/>
</dbReference>
<dbReference type="Pfam" id="PF08670">
    <property type="entry name" value="MEKHLA"/>
    <property type="match status" value="1"/>
</dbReference>
<dbReference type="Pfam" id="PF01852">
    <property type="entry name" value="START"/>
    <property type="match status" value="1"/>
</dbReference>
<dbReference type="SMART" id="SM00389">
    <property type="entry name" value="HOX"/>
    <property type="match status" value="1"/>
</dbReference>
<dbReference type="SMART" id="SM00234">
    <property type="entry name" value="START"/>
    <property type="match status" value="1"/>
</dbReference>
<dbReference type="SUPFAM" id="SSF55961">
    <property type="entry name" value="Bet v1-like"/>
    <property type="match status" value="1"/>
</dbReference>
<dbReference type="SUPFAM" id="SSF46689">
    <property type="entry name" value="Homeodomain-like"/>
    <property type="match status" value="1"/>
</dbReference>
<dbReference type="PROSITE" id="PS50071">
    <property type="entry name" value="HOMEOBOX_2"/>
    <property type="match status" value="1"/>
</dbReference>
<dbReference type="PROSITE" id="PS50848">
    <property type="entry name" value="START"/>
    <property type="match status" value="1"/>
</dbReference>
<sequence>MAAAVAMRSGSGSDGGGGGYDKAGMDSGKYVRYTPEQVEALERVYAECPKPSSSRRQQLLRDCPILANIEPKQIKVWFQNRRCRDKQRKEASRLQAVNRKLTAMNKLLMEENERLQKQVSQLVHENAYMKQQLQNPSLGNDTSCESNVTTPQNPLRDASNPSGLLTIAEETLTEFLSKATGTAVDWVPMPGMKPGPDSFGIVAVSHGCRGVAARACGLVNLEPTKIVEILKDRPSWFRDCRSLEVFTMFPAGNGGTIELVYMQMYAPTTLVPARDFWTLRYTTTMEDGSLVVCERSLSGSGGGPSTASAQQFVRAEMLPSGYLVRPCEGGGSIVHIVDHLDLEAWSVPEVLRPLYESSRVVAQKMTTAALRHIRQIAQETSGEVVYALGRQPAVLRTFSQRLSRGFNDAISGFNDDGWSVMGGDGIEDVIIACNAKKVRNTSTSANAFVTPGGVICAKASMLLQSVPPAVLVRFLREHRSEWADYNFDAYSASSLKTSSCSLPGLRPMRFSGSQIIMPLAHTVENEEILEVVRLEGQALTHDDGLMSRDIHLLQLCTGIDEKSMGSCFQLVSAPIDELFPDDAPLISSGFRVIPLDMKTDGTPAGRTLDLASSLEVGSTAQPTGDASMDDCNLRSVLTIAFQFPYEMHLQDSVATMARQYVRSIVSSVQRVSMAISPSRSGLNAGQKIISGFPEAPTLARWICQSYQFHLGVELLRQADDAGEALLKMLWDYEDAILCCSFKEKPVFTFANEMGLNMLETSLVALQDLSLDKIFDEAGRKALYNEIPKLMEQGYVYLPGGVCLSGMGRHVSFEQAVAWKVLGEDNNVHCLAFCFVNWSFV</sequence>
<protein>
    <recommendedName>
        <fullName>Homeobox-leucine zipper protein HOX9</fullName>
    </recommendedName>
    <alternativeName>
        <fullName>HD-ZIP protein HOX9</fullName>
    </alternativeName>
    <alternativeName>
        <fullName>Homeodomain transcription factor HOX9</fullName>
    </alternativeName>
    <alternativeName>
        <fullName>OsHB2</fullName>
    </alternativeName>
    <alternativeName>
        <fullName>OsHox9</fullName>
    </alternativeName>
</protein>